<reference key="1">
    <citation type="journal article" date="2008" name="Genome Biol.">
        <title>Encapsulated in silica: genome, proteome and physiology of the thermophilic bacterium Anoxybacillus flavithermus WK1.</title>
        <authorList>
            <person name="Saw J.H."/>
            <person name="Mountain B.W."/>
            <person name="Feng L."/>
            <person name="Omelchenko M.V."/>
            <person name="Hou S."/>
            <person name="Saito J.A."/>
            <person name="Stott M.B."/>
            <person name="Li D."/>
            <person name="Zhao G."/>
            <person name="Wu J."/>
            <person name="Galperin M.Y."/>
            <person name="Koonin E.V."/>
            <person name="Makarova K.S."/>
            <person name="Wolf Y.I."/>
            <person name="Rigden D.J."/>
            <person name="Dunfield P.F."/>
            <person name="Wang L."/>
            <person name="Alam M."/>
        </authorList>
    </citation>
    <scope>NUCLEOTIDE SEQUENCE [LARGE SCALE GENOMIC DNA]</scope>
    <source>
        <strain>DSM 21510 / WK1</strain>
    </source>
</reference>
<gene>
    <name evidence="1" type="primary">psd</name>
    <name type="ordered locus">Aflv_0809</name>
</gene>
<accession>B7GKA2</accession>
<proteinExistence type="inferred from homology"/>
<name>PSD_ANOFW</name>
<evidence type="ECO:0000255" key="1">
    <source>
        <dbReference type="HAMAP-Rule" id="MF_00662"/>
    </source>
</evidence>
<dbReference type="EC" id="4.1.1.65" evidence="1"/>
<dbReference type="EMBL" id="CP000922">
    <property type="protein sequence ID" value="ACJ33187.1"/>
    <property type="molecule type" value="Genomic_DNA"/>
</dbReference>
<dbReference type="RefSeq" id="WP_012574482.1">
    <property type="nucleotide sequence ID" value="NC_011567.1"/>
</dbReference>
<dbReference type="SMR" id="B7GKA2"/>
<dbReference type="STRING" id="491915.Aflv_0809"/>
<dbReference type="GeneID" id="7037066"/>
<dbReference type="KEGG" id="afl:Aflv_0809"/>
<dbReference type="PATRIC" id="fig|491915.6.peg.829"/>
<dbReference type="eggNOG" id="COG0688">
    <property type="taxonomic scope" value="Bacteria"/>
</dbReference>
<dbReference type="HOGENOM" id="CLU_029061_4_0_9"/>
<dbReference type="UniPathway" id="UPA00558">
    <property type="reaction ID" value="UER00616"/>
</dbReference>
<dbReference type="Proteomes" id="UP000000742">
    <property type="component" value="Chromosome"/>
</dbReference>
<dbReference type="GO" id="GO:0005886">
    <property type="term" value="C:plasma membrane"/>
    <property type="evidence" value="ECO:0007669"/>
    <property type="project" value="UniProtKB-SubCell"/>
</dbReference>
<dbReference type="GO" id="GO:0004609">
    <property type="term" value="F:phosphatidylserine decarboxylase activity"/>
    <property type="evidence" value="ECO:0007669"/>
    <property type="project" value="UniProtKB-UniRule"/>
</dbReference>
<dbReference type="GO" id="GO:0006646">
    <property type="term" value="P:phosphatidylethanolamine biosynthetic process"/>
    <property type="evidence" value="ECO:0007669"/>
    <property type="project" value="UniProtKB-UniRule"/>
</dbReference>
<dbReference type="HAMAP" id="MF_00662">
    <property type="entry name" value="PS_decarb_PSD_B_type1"/>
    <property type="match status" value="1"/>
</dbReference>
<dbReference type="InterPro" id="IPR003817">
    <property type="entry name" value="PS_Dcarbxylase"/>
</dbReference>
<dbReference type="InterPro" id="IPR033177">
    <property type="entry name" value="PSD-B"/>
</dbReference>
<dbReference type="InterPro" id="IPR033178">
    <property type="entry name" value="PSD_type1_pro"/>
</dbReference>
<dbReference type="NCBIfam" id="NF002853">
    <property type="entry name" value="PRK03140.1"/>
    <property type="match status" value="1"/>
</dbReference>
<dbReference type="NCBIfam" id="TIGR00163">
    <property type="entry name" value="PS_decarb"/>
    <property type="match status" value="1"/>
</dbReference>
<dbReference type="PANTHER" id="PTHR10067">
    <property type="entry name" value="PHOSPHATIDYLSERINE DECARBOXYLASE"/>
    <property type="match status" value="1"/>
</dbReference>
<dbReference type="PANTHER" id="PTHR10067:SF6">
    <property type="entry name" value="PHOSPHATIDYLSERINE DECARBOXYLASE PROENZYME, MITOCHONDRIAL"/>
    <property type="match status" value="1"/>
</dbReference>
<dbReference type="Pfam" id="PF02666">
    <property type="entry name" value="PS_Dcarbxylase"/>
    <property type="match status" value="1"/>
</dbReference>
<comment type="function">
    <text evidence="1">Catalyzes the formation of phosphatidylethanolamine (PtdEtn) from phosphatidylserine (PtdSer).</text>
</comment>
<comment type="catalytic activity">
    <reaction evidence="1">
        <text>a 1,2-diacyl-sn-glycero-3-phospho-L-serine + H(+) = a 1,2-diacyl-sn-glycero-3-phosphoethanolamine + CO2</text>
        <dbReference type="Rhea" id="RHEA:20828"/>
        <dbReference type="ChEBI" id="CHEBI:15378"/>
        <dbReference type="ChEBI" id="CHEBI:16526"/>
        <dbReference type="ChEBI" id="CHEBI:57262"/>
        <dbReference type="ChEBI" id="CHEBI:64612"/>
        <dbReference type="EC" id="4.1.1.65"/>
    </reaction>
</comment>
<comment type="cofactor">
    <cofactor evidence="1">
        <name>pyruvate</name>
        <dbReference type="ChEBI" id="CHEBI:15361"/>
    </cofactor>
    <text evidence="1">Binds 1 pyruvoyl group covalently per subunit.</text>
</comment>
<comment type="pathway">
    <text evidence="1">Phospholipid metabolism; phosphatidylethanolamine biosynthesis; phosphatidylethanolamine from CDP-diacylglycerol: step 2/2.</text>
</comment>
<comment type="subunit">
    <text evidence="1">Heterodimer of a large membrane-associated beta subunit and a small pyruvoyl-containing alpha subunit.</text>
</comment>
<comment type="subcellular location">
    <subcellularLocation>
        <location evidence="1">Cell membrane</location>
        <topology evidence="1">Peripheral membrane protein</topology>
    </subcellularLocation>
</comment>
<comment type="PTM">
    <text evidence="1">Is synthesized initially as an inactive proenzyme. Formation of the active enzyme involves a self-maturation process in which the active site pyruvoyl group is generated from an internal serine residue via an autocatalytic post-translational modification. Two non-identical subunits are generated from the proenzyme in this reaction, and the pyruvate is formed at the N-terminus of the alpha chain, which is derived from the carboxyl end of the proenzyme. The autoendoproteolytic cleavage occurs by a canonical serine protease mechanism, in which the side chain hydroxyl group of the serine supplies its oxygen atom to form the C-terminus of the beta chain, while the remainder of the serine residue undergoes an oxidative deamination to produce ammonia and the pyruvoyl prosthetic group on the alpha chain. During this reaction, the Ser that is part of the protease active site of the proenzyme becomes the pyruvoyl prosthetic group, which constitutes an essential element of the active site of the mature decarboxylase.</text>
</comment>
<comment type="similarity">
    <text evidence="1">Belongs to the phosphatidylserine decarboxylase family. PSD-B subfamily. Prokaryotic type I sub-subfamily.</text>
</comment>
<protein>
    <recommendedName>
        <fullName evidence="1">Phosphatidylserine decarboxylase proenzyme</fullName>
        <ecNumber evidence="1">4.1.1.65</ecNumber>
    </recommendedName>
    <component>
        <recommendedName>
            <fullName evidence="1">Phosphatidylserine decarboxylase alpha chain</fullName>
        </recommendedName>
    </component>
    <component>
        <recommendedName>
            <fullName evidence="1">Phosphatidylserine decarboxylase beta chain</fullName>
        </recommendedName>
    </component>
</protein>
<organism>
    <name type="scientific">Anoxybacillus flavithermus (strain DSM 21510 / WK1)</name>
    <dbReference type="NCBI Taxonomy" id="491915"/>
    <lineage>
        <taxon>Bacteria</taxon>
        <taxon>Bacillati</taxon>
        <taxon>Bacillota</taxon>
        <taxon>Bacilli</taxon>
        <taxon>Bacillales</taxon>
        <taxon>Anoxybacillaceae</taxon>
        <taxon>Anoxybacillus</taxon>
    </lineage>
</organism>
<sequence length="265" mass="30642">MVKWLYQLFIELTNHAWTSKCLASFTRSKWSRLFISSYAKVYKINKEEMEKKLHEYETLQQLFVRTLKKGLRPIDTHPDSVVSPVDAVIEDVGIITDQKEIIVKGKTYSIREMLGDDQIAEKYLHGTFIILYLSPSHYHRIHSPICGEVVKQWELGGKSYPVNRLGLKYGKAPLSKNYRRITELYTNGMYTAIVKVGAMFVNSIELTHEHDHVKKGEEIGYFSFGSTVVLLFEKDVFTLDEQIVPPFEVKMGQRIGFLAQKKKSQ</sequence>
<feature type="chain" id="PRO_1000131338" description="Phosphatidylserine decarboxylase beta chain" evidence="1">
    <location>
        <begin position="1"/>
        <end position="225"/>
    </location>
</feature>
<feature type="chain" id="PRO_1000131339" description="Phosphatidylserine decarboxylase alpha chain" evidence="1">
    <location>
        <begin position="226"/>
        <end position="265"/>
    </location>
</feature>
<feature type="active site" description="Charge relay system; for autoendoproteolytic cleavage activity" evidence="1">
    <location>
        <position position="86"/>
    </location>
</feature>
<feature type="active site" description="Charge relay system; for autoendoproteolytic cleavage activity" evidence="1">
    <location>
        <position position="142"/>
    </location>
</feature>
<feature type="active site" description="Charge relay system; for autoendoproteolytic cleavage activity" evidence="1">
    <location>
        <position position="226"/>
    </location>
</feature>
<feature type="active site" description="Schiff-base intermediate with substrate; via pyruvic acid; for decarboxylase activity" evidence="1">
    <location>
        <position position="226"/>
    </location>
</feature>
<feature type="site" description="Cleavage (non-hydrolytic); by autocatalysis" evidence="1">
    <location>
        <begin position="225"/>
        <end position="226"/>
    </location>
</feature>
<feature type="modified residue" description="Pyruvic acid (Ser); by autocatalysis" evidence="1">
    <location>
        <position position="226"/>
    </location>
</feature>
<keyword id="KW-1003">Cell membrane</keyword>
<keyword id="KW-0210">Decarboxylase</keyword>
<keyword id="KW-0444">Lipid biosynthesis</keyword>
<keyword id="KW-0443">Lipid metabolism</keyword>
<keyword id="KW-0456">Lyase</keyword>
<keyword id="KW-0472">Membrane</keyword>
<keyword id="KW-0594">Phospholipid biosynthesis</keyword>
<keyword id="KW-1208">Phospholipid metabolism</keyword>
<keyword id="KW-0670">Pyruvate</keyword>
<keyword id="KW-0865">Zymogen</keyword>